<evidence type="ECO:0000255" key="1">
    <source>
        <dbReference type="HAMAP-Rule" id="MF_00022"/>
    </source>
</evidence>
<dbReference type="EC" id="6.1.1.17" evidence="1"/>
<dbReference type="EMBL" id="CP000890">
    <property type="protein sequence ID" value="ABX78662.1"/>
    <property type="molecule type" value="Genomic_DNA"/>
</dbReference>
<dbReference type="SMR" id="A9N925"/>
<dbReference type="KEGG" id="cbs:COXBURSA331_A1667"/>
<dbReference type="HOGENOM" id="CLU_015768_6_3_6"/>
<dbReference type="GO" id="GO:0005829">
    <property type="term" value="C:cytosol"/>
    <property type="evidence" value="ECO:0007669"/>
    <property type="project" value="TreeGrafter"/>
</dbReference>
<dbReference type="GO" id="GO:0005524">
    <property type="term" value="F:ATP binding"/>
    <property type="evidence" value="ECO:0007669"/>
    <property type="project" value="UniProtKB-UniRule"/>
</dbReference>
<dbReference type="GO" id="GO:0004818">
    <property type="term" value="F:glutamate-tRNA ligase activity"/>
    <property type="evidence" value="ECO:0007669"/>
    <property type="project" value="UniProtKB-UniRule"/>
</dbReference>
<dbReference type="GO" id="GO:0000049">
    <property type="term" value="F:tRNA binding"/>
    <property type="evidence" value="ECO:0007669"/>
    <property type="project" value="InterPro"/>
</dbReference>
<dbReference type="GO" id="GO:0008270">
    <property type="term" value="F:zinc ion binding"/>
    <property type="evidence" value="ECO:0007669"/>
    <property type="project" value="InterPro"/>
</dbReference>
<dbReference type="GO" id="GO:0006424">
    <property type="term" value="P:glutamyl-tRNA aminoacylation"/>
    <property type="evidence" value="ECO:0007669"/>
    <property type="project" value="UniProtKB-UniRule"/>
</dbReference>
<dbReference type="CDD" id="cd00808">
    <property type="entry name" value="GluRS_core"/>
    <property type="match status" value="1"/>
</dbReference>
<dbReference type="FunFam" id="3.40.50.620:FF:000007">
    <property type="entry name" value="Glutamate--tRNA ligase"/>
    <property type="match status" value="1"/>
</dbReference>
<dbReference type="Gene3D" id="1.10.10.350">
    <property type="match status" value="1"/>
</dbReference>
<dbReference type="Gene3D" id="3.40.50.620">
    <property type="entry name" value="HUPs"/>
    <property type="match status" value="1"/>
</dbReference>
<dbReference type="HAMAP" id="MF_00022">
    <property type="entry name" value="Glu_tRNA_synth_type1"/>
    <property type="match status" value="1"/>
</dbReference>
<dbReference type="InterPro" id="IPR045462">
    <property type="entry name" value="aa-tRNA-synth_I_cd-bd"/>
</dbReference>
<dbReference type="InterPro" id="IPR020751">
    <property type="entry name" value="aa-tRNA-synth_I_codon-bd_sub2"/>
</dbReference>
<dbReference type="InterPro" id="IPR001412">
    <property type="entry name" value="aa-tRNA-synth_I_CS"/>
</dbReference>
<dbReference type="InterPro" id="IPR008925">
    <property type="entry name" value="aa_tRNA-synth_I_cd-bd_sf"/>
</dbReference>
<dbReference type="InterPro" id="IPR004527">
    <property type="entry name" value="Glu-tRNA-ligase_bac/mito"/>
</dbReference>
<dbReference type="InterPro" id="IPR000924">
    <property type="entry name" value="Glu/Gln-tRNA-synth"/>
</dbReference>
<dbReference type="InterPro" id="IPR020058">
    <property type="entry name" value="Glu/Gln-tRNA-synth_Ib_cat-dom"/>
</dbReference>
<dbReference type="InterPro" id="IPR049940">
    <property type="entry name" value="GluQ/Sye"/>
</dbReference>
<dbReference type="InterPro" id="IPR033910">
    <property type="entry name" value="GluRS_core"/>
</dbReference>
<dbReference type="InterPro" id="IPR014729">
    <property type="entry name" value="Rossmann-like_a/b/a_fold"/>
</dbReference>
<dbReference type="NCBIfam" id="TIGR00464">
    <property type="entry name" value="gltX_bact"/>
    <property type="match status" value="1"/>
</dbReference>
<dbReference type="PANTHER" id="PTHR43311">
    <property type="entry name" value="GLUTAMATE--TRNA LIGASE"/>
    <property type="match status" value="1"/>
</dbReference>
<dbReference type="PANTHER" id="PTHR43311:SF2">
    <property type="entry name" value="GLUTAMATE--TRNA LIGASE, MITOCHONDRIAL-RELATED"/>
    <property type="match status" value="1"/>
</dbReference>
<dbReference type="Pfam" id="PF19269">
    <property type="entry name" value="Anticodon_2"/>
    <property type="match status" value="1"/>
</dbReference>
<dbReference type="Pfam" id="PF00749">
    <property type="entry name" value="tRNA-synt_1c"/>
    <property type="match status" value="1"/>
</dbReference>
<dbReference type="PRINTS" id="PR00987">
    <property type="entry name" value="TRNASYNTHGLU"/>
</dbReference>
<dbReference type="SUPFAM" id="SSF48163">
    <property type="entry name" value="An anticodon-binding domain of class I aminoacyl-tRNA synthetases"/>
    <property type="match status" value="1"/>
</dbReference>
<dbReference type="SUPFAM" id="SSF52374">
    <property type="entry name" value="Nucleotidylyl transferase"/>
    <property type="match status" value="1"/>
</dbReference>
<dbReference type="PROSITE" id="PS00178">
    <property type="entry name" value="AA_TRNA_LIGASE_I"/>
    <property type="match status" value="1"/>
</dbReference>
<gene>
    <name evidence="1" type="primary">gltX2</name>
    <name type="ordered locus">COXBURSA331_A1667</name>
</gene>
<name>SYE2_COXBR</name>
<reference key="1">
    <citation type="submission" date="2007-11" db="EMBL/GenBank/DDBJ databases">
        <title>Genome sequencing of phylogenetically and phenotypically diverse Coxiella burnetii isolates.</title>
        <authorList>
            <person name="Seshadri R."/>
            <person name="Samuel J.E."/>
        </authorList>
    </citation>
    <scope>NUCLEOTIDE SEQUENCE [LARGE SCALE GENOMIC DNA]</scope>
    <source>
        <strain>RSA 331 / Henzerling II</strain>
    </source>
</reference>
<feature type="chain" id="PRO_0000367662" description="Glutamate--tRNA ligase 2">
    <location>
        <begin position="1"/>
        <end position="465"/>
    </location>
</feature>
<feature type="short sequence motif" description="'HIGH' region" evidence="1">
    <location>
        <begin position="8"/>
        <end position="18"/>
    </location>
</feature>
<feature type="short sequence motif" description="'KMSKS' region" evidence="1">
    <location>
        <begin position="249"/>
        <end position="253"/>
    </location>
</feature>
<feature type="binding site" evidence="1">
    <location>
        <position position="252"/>
    </location>
    <ligand>
        <name>ATP</name>
        <dbReference type="ChEBI" id="CHEBI:30616"/>
    </ligand>
</feature>
<protein>
    <recommendedName>
        <fullName evidence="1">Glutamate--tRNA ligase 2</fullName>
        <ecNumber evidence="1">6.1.1.17</ecNumber>
    </recommendedName>
    <alternativeName>
        <fullName evidence="1">Glutamyl-tRNA synthetase 2</fullName>
        <shortName evidence="1">GluRS 2</shortName>
    </alternativeName>
</protein>
<accession>A9N925</accession>
<keyword id="KW-0030">Aminoacyl-tRNA synthetase</keyword>
<keyword id="KW-0067">ATP-binding</keyword>
<keyword id="KW-0963">Cytoplasm</keyword>
<keyword id="KW-0436">Ligase</keyword>
<keyword id="KW-0547">Nucleotide-binding</keyword>
<keyword id="KW-0648">Protein biosynthesis</keyword>
<comment type="function">
    <text evidence="1">Catalyzes the attachment of glutamate to tRNA(Glu) in a two-step reaction: glutamate is first activated by ATP to form Glu-AMP and then transferred to the acceptor end of tRNA(Glu).</text>
</comment>
<comment type="catalytic activity">
    <reaction evidence="1">
        <text>tRNA(Glu) + L-glutamate + ATP = L-glutamyl-tRNA(Glu) + AMP + diphosphate</text>
        <dbReference type="Rhea" id="RHEA:23540"/>
        <dbReference type="Rhea" id="RHEA-COMP:9663"/>
        <dbReference type="Rhea" id="RHEA-COMP:9680"/>
        <dbReference type="ChEBI" id="CHEBI:29985"/>
        <dbReference type="ChEBI" id="CHEBI:30616"/>
        <dbReference type="ChEBI" id="CHEBI:33019"/>
        <dbReference type="ChEBI" id="CHEBI:78442"/>
        <dbReference type="ChEBI" id="CHEBI:78520"/>
        <dbReference type="ChEBI" id="CHEBI:456215"/>
        <dbReference type="EC" id="6.1.1.17"/>
    </reaction>
</comment>
<comment type="subunit">
    <text evidence="1">Monomer.</text>
</comment>
<comment type="subcellular location">
    <subcellularLocation>
        <location evidence="1">Cytoplasm</location>
    </subcellularLocation>
</comment>
<comment type="similarity">
    <text evidence="1">Belongs to the class-I aminoacyl-tRNA synthetase family. Glutamate--tRNA ligase type 1 subfamily.</text>
</comment>
<sequence length="465" mass="52763">MMKSRFCPSPTGLMHLGNARTALFNYLFAKSKDGIFLLRIEDTDVERSKETFDLGLQEDLRWLNLEWQEGPGADEGNGPYHQSKRQAIYDDYYQRLEEADQAYPCFCSEEQLRLSRKIQRSAGKPPRYAGTCRSLSAAEIEKKKAEGLQPALRFRVPDDEVVVFADLVRGEQRFQTNDIGDFIIRRANGTSPFMFCNAIDDALMGVSHVLRGEDHLTNTPRQLLILQALELPVPTYAHIALIVGPDGSPLSKRHGSRGIKELRDNGYLPLALTNYLARLGHYYASDELLSLAELAKGFNVESLSKSPAKFNAQQLDYWQKQTVNQLPNDDFWEWAGSELQSQIPTDKDDLFLTTVKPNVSFPRDVAYWVNVCFGKTLNLETAQSELLRATGNRYFEEAFEAFKKFGKDLNSVVSHLKEKLNLKGKPLYQPLRIALTGAEHGPELAKLILIMDYETIQNRLQEACQ</sequence>
<proteinExistence type="inferred from homology"/>
<organism>
    <name type="scientific">Coxiella burnetii (strain RSA 331 / Henzerling II)</name>
    <dbReference type="NCBI Taxonomy" id="360115"/>
    <lineage>
        <taxon>Bacteria</taxon>
        <taxon>Pseudomonadati</taxon>
        <taxon>Pseudomonadota</taxon>
        <taxon>Gammaproteobacteria</taxon>
        <taxon>Legionellales</taxon>
        <taxon>Coxiellaceae</taxon>
        <taxon>Coxiella</taxon>
    </lineage>
</organism>